<accession>Q54VV8</accession>
<comment type="function">
    <text evidence="2">Component of the Mediator complex, a coactivator involved in the regulated transcription of nearly all RNA polymerase II-dependent genes. Mediator functions as a bridge to convey information from gene-specific regulatory proteins to the basal RNA polymerase II transcription machinery. Mediator is recruited to promoters by direct interactions with regulatory proteins and serves as a scaffold for the assembly of a functional pre-initiation complex with RNA polymerase II and the general transcription factors (By similarity).</text>
</comment>
<comment type="subunit">
    <text evidence="1">Component of the Mediator complex.</text>
</comment>
<comment type="subcellular location">
    <subcellularLocation>
        <location evidence="1">Nucleus</location>
    </subcellularLocation>
</comment>
<comment type="similarity">
    <text evidence="5">Belongs to the Mediator complex subunit 11 family.</text>
</comment>
<organism>
    <name type="scientific">Dictyostelium discoideum</name>
    <name type="common">Social amoeba</name>
    <dbReference type="NCBI Taxonomy" id="44689"/>
    <lineage>
        <taxon>Eukaryota</taxon>
        <taxon>Amoebozoa</taxon>
        <taxon>Evosea</taxon>
        <taxon>Eumycetozoa</taxon>
        <taxon>Dictyostelia</taxon>
        <taxon>Dictyosteliales</taxon>
        <taxon>Dictyosteliaceae</taxon>
        <taxon>Dictyostelium</taxon>
    </lineage>
</organism>
<evidence type="ECO:0000250" key="1"/>
<evidence type="ECO:0000250" key="2">
    <source>
        <dbReference type="UniProtKB" id="Q99278"/>
    </source>
</evidence>
<evidence type="ECO:0000255" key="3"/>
<evidence type="ECO:0000256" key="4">
    <source>
        <dbReference type="SAM" id="MobiDB-lite"/>
    </source>
</evidence>
<evidence type="ECO:0000305" key="5"/>
<sequence length="143" mass="16562">MNSLSILNNIEDKVVEAINTAALSLESLSASLDIENTNENFSKFQTQSDKFYNLVKKDIHKGLIDFIDSMTDIAPFDHSSYLKKSELEVSHNFTEIILSHLEDLNNIVENNQEKQEKEKQEKEKLEKEKLEKEKQQSNEMNID</sequence>
<reference key="1">
    <citation type="journal article" date="2005" name="Nature">
        <title>The genome of the social amoeba Dictyostelium discoideum.</title>
        <authorList>
            <person name="Eichinger L."/>
            <person name="Pachebat J.A."/>
            <person name="Gloeckner G."/>
            <person name="Rajandream M.A."/>
            <person name="Sucgang R."/>
            <person name="Berriman M."/>
            <person name="Song J."/>
            <person name="Olsen R."/>
            <person name="Szafranski K."/>
            <person name="Xu Q."/>
            <person name="Tunggal B."/>
            <person name="Kummerfeld S."/>
            <person name="Madera M."/>
            <person name="Konfortov B.A."/>
            <person name="Rivero F."/>
            <person name="Bankier A.T."/>
            <person name="Lehmann R."/>
            <person name="Hamlin N."/>
            <person name="Davies R."/>
            <person name="Gaudet P."/>
            <person name="Fey P."/>
            <person name="Pilcher K."/>
            <person name="Chen G."/>
            <person name="Saunders D."/>
            <person name="Sodergren E.J."/>
            <person name="Davis P."/>
            <person name="Kerhornou A."/>
            <person name="Nie X."/>
            <person name="Hall N."/>
            <person name="Anjard C."/>
            <person name="Hemphill L."/>
            <person name="Bason N."/>
            <person name="Farbrother P."/>
            <person name="Desany B."/>
            <person name="Just E."/>
            <person name="Morio T."/>
            <person name="Rost R."/>
            <person name="Churcher C.M."/>
            <person name="Cooper J."/>
            <person name="Haydock S."/>
            <person name="van Driessche N."/>
            <person name="Cronin A."/>
            <person name="Goodhead I."/>
            <person name="Muzny D.M."/>
            <person name="Mourier T."/>
            <person name="Pain A."/>
            <person name="Lu M."/>
            <person name="Harper D."/>
            <person name="Lindsay R."/>
            <person name="Hauser H."/>
            <person name="James K.D."/>
            <person name="Quiles M."/>
            <person name="Madan Babu M."/>
            <person name="Saito T."/>
            <person name="Buchrieser C."/>
            <person name="Wardroper A."/>
            <person name="Felder M."/>
            <person name="Thangavelu M."/>
            <person name="Johnson D."/>
            <person name="Knights A."/>
            <person name="Loulseged H."/>
            <person name="Mungall K.L."/>
            <person name="Oliver K."/>
            <person name="Price C."/>
            <person name="Quail M.A."/>
            <person name="Urushihara H."/>
            <person name="Hernandez J."/>
            <person name="Rabbinowitsch E."/>
            <person name="Steffen D."/>
            <person name="Sanders M."/>
            <person name="Ma J."/>
            <person name="Kohara Y."/>
            <person name="Sharp S."/>
            <person name="Simmonds M.N."/>
            <person name="Spiegler S."/>
            <person name="Tivey A."/>
            <person name="Sugano S."/>
            <person name="White B."/>
            <person name="Walker D."/>
            <person name="Woodward J.R."/>
            <person name="Winckler T."/>
            <person name="Tanaka Y."/>
            <person name="Shaulsky G."/>
            <person name="Schleicher M."/>
            <person name="Weinstock G.M."/>
            <person name="Rosenthal A."/>
            <person name="Cox E.C."/>
            <person name="Chisholm R.L."/>
            <person name="Gibbs R.A."/>
            <person name="Loomis W.F."/>
            <person name="Platzer M."/>
            <person name="Kay R.R."/>
            <person name="Williams J.G."/>
            <person name="Dear P.H."/>
            <person name="Noegel A.A."/>
            <person name="Barrell B.G."/>
            <person name="Kuspa A."/>
        </authorList>
    </citation>
    <scope>NUCLEOTIDE SEQUENCE [LARGE SCALE GENOMIC DNA]</scope>
    <source>
        <strain>AX4</strain>
    </source>
</reference>
<reference key="2">
    <citation type="journal article" date="2008" name="Nucleic Acids Res.">
        <title>Comparative genomics supports a deep evolutionary origin for the large, four-module transcriptional mediator complex.</title>
        <authorList>
            <person name="Bourbon H.-M."/>
        </authorList>
    </citation>
    <scope>NOMENCLATURE</scope>
</reference>
<keyword id="KW-0010">Activator</keyword>
<keyword id="KW-0175">Coiled coil</keyword>
<keyword id="KW-0217">Developmental protein</keyword>
<keyword id="KW-0539">Nucleus</keyword>
<keyword id="KW-1185">Reference proteome</keyword>
<keyword id="KW-0804">Transcription</keyword>
<keyword id="KW-0805">Transcription regulation</keyword>
<dbReference type="EMBL" id="AAFI02000035">
    <property type="protein sequence ID" value="EAL67281.1"/>
    <property type="molecule type" value="Genomic_DNA"/>
</dbReference>
<dbReference type="RefSeq" id="XP_641247.1">
    <property type="nucleotide sequence ID" value="XM_636155.1"/>
</dbReference>
<dbReference type="FunCoup" id="Q54VV8">
    <property type="interactions" value="27"/>
</dbReference>
<dbReference type="STRING" id="44689.Q54VV8"/>
<dbReference type="PaxDb" id="44689-DDB0266870"/>
<dbReference type="EnsemblProtists" id="EAL67281">
    <property type="protein sequence ID" value="EAL67281"/>
    <property type="gene ID" value="DDB_G0280109"/>
</dbReference>
<dbReference type="GeneID" id="8622379"/>
<dbReference type="KEGG" id="ddi:DDB_G0280109"/>
<dbReference type="dictyBase" id="DDB_G0280109">
    <property type="gene designation" value="med11"/>
</dbReference>
<dbReference type="VEuPathDB" id="AmoebaDB:DDB_G0280109"/>
<dbReference type="eggNOG" id="ENOG502RHVU">
    <property type="taxonomic scope" value="Eukaryota"/>
</dbReference>
<dbReference type="HOGENOM" id="CLU_1809789_0_0_1"/>
<dbReference type="InParanoid" id="Q54VV8"/>
<dbReference type="OMA" id="PFDHSSY"/>
<dbReference type="PRO" id="PR:Q54VV8"/>
<dbReference type="Proteomes" id="UP000002195">
    <property type="component" value="Chromosome 3"/>
</dbReference>
<dbReference type="GO" id="GO:0070847">
    <property type="term" value="C:core mediator complex"/>
    <property type="evidence" value="ECO:0000250"/>
    <property type="project" value="dictyBase"/>
</dbReference>
<dbReference type="GO" id="GO:0016592">
    <property type="term" value="C:mediator complex"/>
    <property type="evidence" value="ECO:0000318"/>
    <property type="project" value="GO_Central"/>
</dbReference>
<dbReference type="GO" id="GO:0001097">
    <property type="term" value="F:TFIIH-class transcription factor complex binding"/>
    <property type="evidence" value="ECO:0000250"/>
    <property type="project" value="dictyBase"/>
</dbReference>
<dbReference type="GO" id="GO:0003712">
    <property type="term" value="F:transcription coregulator activity"/>
    <property type="evidence" value="ECO:0007669"/>
    <property type="project" value="InterPro"/>
</dbReference>
<dbReference type="GO" id="GO:0006357">
    <property type="term" value="P:regulation of transcription by RNA polymerase II"/>
    <property type="evidence" value="ECO:0007669"/>
    <property type="project" value="InterPro"/>
</dbReference>
<dbReference type="GO" id="GO:0006366">
    <property type="term" value="P:transcription by RNA polymerase II"/>
    <property type="evidence" value="ECO:0000250"/>
    <property type="project" value="dictyBase"/>
</dbReference>
<dbReference type="InterPro" id="IPR019404">
    <property type="entry name" value="Mediator_Med11"/>
</dbReference>
<dbReference type="PANTHER" id="PTHR22890">
    <property type="entry name" value="MEDIATOR OF RNA POLYMERASE II TRANSCRIPTION SUBUNIT 11"/>
    <property type="match status" value="1"/>
</dbReference>
<dbReference type="Pfam" id="PF10280">
    <property type="entry name" value="Med11"/>
    <property type="match status" value="1"/>
</dbReference>
<proteinExistence type="inferred from homology"/>
<name>MED11_DICDI</name>
<gene>
    <name type="primary">med11</name>
    <name type="ORF">DDB_G0280109</name>
</gene>
<feature type="chain" id="PRO_0000388651" description="Putative mediator of RNA polymerase II transcription subunit 11">
    <location>
        <begin position="1"/>
        <end position="143"/>
    </location>
</feature>
<feature type="region of interest" description="Disordered" evidence="4">
    <location>
        <begin position="109"/>
        <end position="143"/>
    </location>
</feature>
<feature type="coiled-coil region" evidence="3">
    <location>
        <begin position="97"/>
        <end position="143"/>
    </location>
</feature>
<feature type="compositionally biased region" description="Basic and acidic residues" evidence="4">
    <location>
        <begin position="111"/>
        <end position="136"/>
    </location>
</feature>
<protein>
    <recommendedName>
        <fullName>Putative mediator of RNA polymerase II transcription subunit 11</fullName>
    </recommendedName>
    <alternativeName>
        <fullName>Putative mediator complex subunit 11</fullName>
    </alternativeName>
</protein>